<dbReference type="EMBL" id="AL591981">
    <property type="protein sequence ID" value="CAD00028.1"/>
    <property type="molecule type" value="Genomic_DNA"/>
</dbReference>
<dbReference type="PIR" id="AF1318">
    <property type="entry name" value="AF1318"/>
</dbReference>
<dbReference type="RefSeq" id="NP_465474.1">
    <property type="nucleotide sequence ID" value="NC_003210.1"/>
</dbReference>
<dbReference type="RefSeq" id="WP_003723597.1">
    <property type="nucleotide sequence ID" value="NZ_CP149495.1"/>
</dbReference>
<dbReference type="SMR" id="Q8Y5V5"/>
<dbReference type="STRING" id="169963.gene:17594635"/>
<dbReference type="PaxDb" id="169963-lmo1950"/>
<dbReference type="EnsemblBacteria" id="CAD00028">
    <property type="protein sequence ID" value="CAD00028"/>
    <property type="gene ID" value="CAD00028"/>
</dbReference>
<dbReference type="GeneID" id="985025"/>
<dbReference type="KEGG" id="lmo:lmo1950"/>
<dbReference type="PATRIC" id="fig|169963.11.peg.1997"/>
<dbReference type="eggNOG" id="COG1386">
    <property type="taxonomic scope" value="Bacteria"/>
</dbReference>
<dbReference type="HOGENOM" id="CLU_045647_5_3_9"/>
<dbReference type="OrthoDB" id="9806226at2"/>
<dbReference type="PhylomeDB" id="Q8Y5V5"/>
<dbReference type="BioCyc" id="LMON169963:LMO1950-MONOMER"/>
<dbReference type="Proteomes" id="UP000000817">
    <property type="component" value="Chromosome"/>
</dbReference>
<dbReference type="GO" id="GO:0005737">
    <property type="term" value="C:cytoplasm"/>
    <property type="evidence" value="ECO:0007669"/>
    <property type="project" value="UniProtKB-SubCell"/>
</dbReference>
<dbReference type="GO" id="GO:0051301">
    <property type="term" value="P:cell division"/>
    <property type="evidence" value="ECO:0007669"/>
    <property type="project" value="UniProtKB-KW"/>
</dbReference>
<dbReference type="GO" id="GO:0051304">
    <property type="term" value="P:chromosome separation"/>
    <property type="evidence" value="ECO:0007669"/>
    <property type="project" value="InterPro"/>
</dbReference>
<dbReference type="GO" id="GO:0006260">
    <property type="term" value="P:DNA replication"/>
    <property type="evidence" value="ECO:0007669"/>
    <property type="project" value="UniProtKB-UniRule"/>
</dbReference>
<dbReference type="Gene3D" id="1.10.10.10">
    <property type="entry name" value="Winged helix-like DNA-binding domain superfamily/Winged helix DNA-binding domain"/>
    <property type="match status" value="2"/>
</dbReference>
<dbReference type="HAMAP" id="MF_01804">
    <property type="entry name" value="ScpB"/>
    <property type="match status" value="1"/>
</dbReference>
<dbReference type="InterPro" id="IPR005234">
    <property type="entry name" value="ScpB_csome_segregation"/>
</dbReference>
<dbReference type="InterPro" id="IPR036388">
    <property type="entry name" value="WH-like_DNA-bd_sf"/>
</dbReference>
<dbReference type="InterPro" id="IPR036390">
    <property type="entry name" value="WH_DNA-bd_sf"/>
</dbReference>
<dbReference type="NCBIfam" id="TIGR00281">
    <property type="entry name" value="SMC-Scp complex subunit ScpB"/>
    <property type="match status" value="1"/>
</dbReference>
<dbReference type="PANTHER" id="PTHR34298">
    <property type="entry name" value="SEGREGATION AND CONDENSATION PROTEIN B"/>
    <property type="match status" value="1"/>
</dbReference>
<dbReference type="PANTHER" id="PTHR34298:SF2">
    <property type="entry name" value="SEGREGATION AND CONDENSATION PROTEIN B"/>
    <property type="match status" value="1"/>
</dbReference>
<dbReference type="Pfam" id="PF04079">
    <property type="entry name" value="SMC_ScpB"/>
    <property type="match status" value="1"/>
</dbReference>
<dbReference type="PIRSF" id="PIRSF019345">
    <property type="entry name" value="ScpB"/>
    <property type="match status" value="1"/>
</dbReference>
<dbReference type="SUPFAM" id="SSF46785">
    <property type="entry name" value="Winged helix' DNA-binding domain"/>
    <property type="match status" value="2"/>
</dbReference>
<sequence>MNREEQLGVLESLLFAAGDAGLSTEQLTEVMEITHIEALNLLELLSERYNESADRGLILLELAGTFQLATKKAHAEFLRKLVEVPSNTVLSQASLETLAIIAYRQPVTRMEVDEVRGVQTDGPIRTLVAKGLVTDKGRVDGAGRAKLYVTTSEFLDAFGLNSLEDLPKLADPATDEPDQNEMDLFFDRFNQSKEQEEE</sequence>
<accession>Q8Y5V5</accession>
<organism>
    <name type="scientific">Listeria monocytogenes serovar 1/2a (strain ATCC BAA-679 / EGD-e)</name>
    <dbReference type="NCBI Taxonomy" id="169963"/>
    <lineage>
        <taxon>Bacteria</taxon>
        <taxon>Bacillati</taxon>
        <taxon>Bacillota</taxon>
        <taxon>Bacilli</taxon>
        <taxon>Bacillales</taxon>
        <taxon>Listeriaceae</taxon>
        <taxon>Listeria</taxon>
    </lineage>
</organism>
<keyword id="KW-0131">Cell cycle</keyword>
<keyword id="KW-0132">Cell division</keyword>
<keyword id="KW-0159">Chromosome partition</keyword>
<keyword id="KW-0963">Cytoplasm</keyword>
<keyword id="KW-1185">Reference proteome</keyword>
<name>SCPB_LISMO</name>
<reference key="1">
    <citation type="journal article" date="2001" name="Science">
        <title>Comparative genomics of Listeria species.</title>
        <authorList>
            <person name="Glaser P."/>
            <person name="Frangeul L."/>
            <person name="Buchrieser C."/>
            <person name="Rusniok C."/>
            <person name="Amend A."/>
            <person name="Baquero F."/>
            <person name="Berche P."/>
            <person name="Bloecker H."/>
            <person name="Brandt P."/>
            <person name="Chakraborty T."/>
            <person name="Charbit A."/>
            <person name="Chetouani F."/>
            <person name="Couve E."/>
            <person name="de Daruvar A."/>
            <person name="Dehoux P."/>
            <person name="Domann E."/>
            <person name="Dominguez-Bernal G."/>
            <person name="Duchaud E."/>
            <person name="Durant L."/>
            <person name="Dussurget O."/>
            <person name="Entian K.-D."/>
            <person name="Fsihi H."/>
            <person name="Garcia-del Portillo F."/>
            <person name="Garrido P."/>
            <person name="Gautier L."/>
            <person name="Goebel W."/>
            <person name="Gomez-Lopez N."/>
            <person name="Hain T."/>
            <person name="Hauf J."/>
            <person name="Jackson D."/>
            <person name="Jones L.-M."/>
            <person name="Kaerst U."/>
            <person name="Kreft J."/>
            <person name="Kuhn M."/>
            <person name="Kunst F."/>
            <person name="Kurapkat G."/>
            <person name="Madueno E."/>
            <person name="Maitournam A."/>
            <person name="Mata Vicente J."/>
            <person name="Ng E."/>
            <person name="Nedjari H."/>
            <person name="Nordsiek G."/>
            <person name="Novella S."/>
            <person name="de Pablos B."/>
            <person name="Perez-Diaz J.-C."/>
            <person name="Purcell R."/>
            <person name="Remmel B."/>
            <person name="Rose M."/>
            <person name="Schlueter T."/>
            <person name="Simoes N."/>
            <person name="Tierrez A."/>
            <person name="Vazquez-Boland J.-A."/>
            <person name="Voss H."/>
            <person name="Wehland J."/>
            <person name="Cossart P."/>
        </authorList>
    </citation>
    <scope>NUCLEOTIDE SEQUENCE [LARGE SCALE GENOMIC DNA]</scope>
    <source>
        <strain>ATCC BAA-679 / EGD-e</strain>
    </source>
</reference>
<feature type="chain" id="PRO_0000211137" description="Segregation and condensation protein B">
    <location>
        <begin position="1"/>
        <end position="198"/>
    </location>
</feature>
<feature type="region of interest" description="Disordered" evidence="2">
    <location>
        <begin position="168"/>
        <end position="198"/>
    </location>
</feature>
<proteinExistence type="inferred from homology"/>
<evidence type="ECO:0000255" key="1">
    <source>
        <dbReference type="HAMAP-Rule" id="MF_01804"/>
    </source>
</evidence>
<evidence type="ECO:0000256" key="2">
    <source>
        <dbReference type="SAM" id="MobiDB-lite"/>
    </source>
</evidence>
<comment type="function">
    <text evidence="1">Participates in chromosomal partition during cell division. May act via the formation of a condensin-like complex containing Smc and ScpA that pull DNA away from mid-cell into both cell halves.</text>
</comment>
<comment type="subunit">
    <text evidence="1">Homodimer. Homodimerization may be required to stabilize the binding of ScpA to the Smc head domains. Component of a cohesin-like complex composed of ScpA, ScpB and the Smc homodimer, in which ScpA and ScpB bind to the head domain of Smc. The presence of the three proteins is required for the association of the complex with DNA.</text>
</comment>
<comment type="subcellular location">
    <subcellularLocation>
        <location evidence="1">Cytoplasm</location>
    </subcellularLocation>
    <text evidence="1">Associated with two foci at the outer edges of the nucleoid region in young cells, and at four foci within both cell halves in older cells.</text>
</comment>
<comment type="similarity">
    <text evidence="1">Belongs to the ScpB family.</text>
</comment>
<gene>
    <name evidence="1" type="primary">scpB</name>
    <name type="ordered locus">lmo1950</name>
</gene>
<protein>
    <recommendedName>
        <fullName evidence="1">Segregation and condensation protein B</fullName>
    </recommendedName>
</protein>